<sequence length="129" mass="13616">MAKPAARPRKKVKKTVVDGIAHIHASFNNTIVTITDRQGNALSWATSGGSGFRGSRKSTPFAAQVAAERAGQAALEYGLKNLDVNVKGPGPGRESAVRALNGCGYKIASITDVTPIPHNGCRPPKKRRV</sequence>
<organism>
    <name type="scientific">Pseudomonas fluorescens (strain SBW25)</name>
    <dbReference type="NCBI Taxonomy" id="216595"/>
    <lineage>
        <taxon>Bacteria</taxon>
        <taxon>Pseudomonadati</taxon>
        <taxon>Pseudomonadota</taxon>
        <taxon>Gammaproteobacteria</taxon>
        <taxon>Pseudomonadales</taxon>
        <taxon>Pseudomonadaceae</taxon>
        <taxon>Pseudomonas</taxon>
    </lineage>
</organism>
<gene>
    <name evidence="1" type="primary">rpsK</name>
    <name type="ordered locus">PFLU_5504</name>
</gene>
<dbReference type="EMBL" id="AM181176">
    <property type="protein sequence ID" value="CAY52727.1"/>
    <property type="molecule type" value="Genomic_DNA"/>
</dbReference>
<dbReference type="RefSeq" id="WP_002555466.1">
    <property type="nucleotide sequence ID" value="NC_012660.1"/>
</dbReference>
<dbReference type="SMR" id="C3K2V3"/>
<dbReference type="STRING" id="294.SRM1_05157"/>
<dbReference type="GeneID" id="98285415"/>
<dbReference type="eggNOG" id="COG0100">
    <property type="taxonomic scope" value="Bacteria"/>
</dbReference>
<dbReference type="HOGENOM" id="CLU_072439_5_0_6"/>
<dbReference type="OrthoDB" id="9806415at2"/>
<dbReference type="GO" id="GO:1990904">
    <property type="term" value="C:ribonucleoprotein complex"/>
    <property type="evidence" value="ECO:0007669"/>
    <property type="project" value="UniProtKB-KW"/>
</dbReference>
<dbReference type="GO" id="GO:0005840">
    <property type="term" value="C:ribosome"/>
    <property type="evidence" value="ECO:0007669"/>
    <property type="project" value="UniProtKB-KW"/>
</dbReference>
<dbReference type="GO" id="GO:0019843">
    <property type="term" value="F:rRNA binding"/>
    <property type="evidence" value="ECO:0007669"/>
    <property type="project" value="UniProtKB-UniRule"/>
</dbReference>
<dbReference type="GO" id="GO:0003735">
    <property type="term" value="F:structural constituent of ribosome"/>
    <property type="evidence" value="ECO:0007669"/>
    <property type="project" value="InterPro"/>
</dbReference>
<dbReference type="GO" id="GO:0006412">
    <property type="term" value="P:translation"/>
    <property type="evidence" value="ECO:0007669"/>
    <property type="project" value="UniProtKB-UniRule"/>
</dbReference>
<dbReference type="FunFam" id="3.30.420.80:FF:000001">
    <property type="entry name" value="30S ribosomal protein S11"/>
    <property type="match status" value="1"/>
</dbReference>
<dbReference type="Gene3D" id="3.30.420.80">
    <property type="entry name" value="Ribosomal protein S11"/>
    <property type="match status" value="1"/>
</dbReference>
<dbReference type="HAMAP" id="MF_01310">
    <property type="entry name" value="Ribosomal_uS11"/>
    <property type="match status" value="1"/>
</dbReference>
<dbReference type="InterPro" id="IPR001971">
    <property type="entry name" value="Ribosomal_uS11"/>
</dbReference>
<dbReference type="InterPro" id="IPR019981">
    <property type="entry name" value="Ribosomal_uS11_bac-type"/>
</dbReference>
<dbReference type="InterPro" id="IPR018102">
    <property type="entry name" value="Ribosomal_uS11_CS"/>
</dbReference>
<dbReference type="InterPro" id="IPR036967">
    <property type="entry name" value="Ribosomal_uS11_sf"/>
</dbReference>
<dbReference type="NCBIfam" id="NF003698">
    <property type="entry name" value="PRK05309.1"/>
    <property type="match status" value="1"/>
</dbReference>
<dbReference type="NCBIfam" id="TIGR03632">
    <property type="entry name" value="uS11_bact"/>
    <property type="match status" value="1"/>
</dbReference>
<dbReference type="PANTHER" id="PTHR11759">
    <property type="entry name" value="40S RIBOSOMAL PROTEIN S14/30S RIBOSOMAL PROTEIN S11"/>
    <property type="match status" value="1"/>
</dbReference>
<dbReference type="Pfam" id="PF00411">
    <property type="entry name" value="Ribosomal_S11"/>
    <property type="match status" value="1"/>
</dbReference>
<dbReference type="PIRSF" id="PIRSF002131">
    <property type="entry name" value="Ribosomal_S11"/>
    <property type="match status" value="1"/>
</dbReference>
<dbReference type="SUPFAM" id="SSF53137">
    <property type="entry name" value="Translational machinery components"/>
    <property type="match status" value="1"/>
</dbReference>
<dbReference type="PROSITE" id="PS00054">
    <property type="entry name" value="RIBOSOMAL_S11"/>
    <property type="match status" value="1"/>
</dbReference>
<keyword id="KW-0687">Ribonucleoprotein</keyword>
<keyword id="KW-0689">Ribosomal protein</keyword>
<keyword id="KW-0694">RNA-binding</keyword>
<keyword id="KW-0699">rRNA-binding</keyword>
<evidence type="ECO:0000255" key="1">
    <source>
        <dbReference type="HAMAP-Rule" id="MF_01310"/>
    </source>
</evidence>
<evidence type="ECO:0000305" key="2"/>
<feature type="chain" id="PRO_1000214370" description="Small ribosomal subunit protein uS11">
    <location>
        <begin position="1"/>
        <end position="129"/>
    </location>
</feature>
<comment type="function">
    <text evidence="1">Located on the platform of the 30S subunit, it bridges several disparate RNA helices of the 16S rRNA. Forms part of the Shine-Dalgarno cleft in the 70S ribosome.</text>
</comment>
<comment type="subunit">
    <text evidence="1">Part of the 30S ribosomal subunit. Interacts with proteins S7 and S18. Binds to IF-3.</text>
</comment>
<comment type="similarity">
    <text evidence="1">Belongs to the universal ribosomal protein uS11 family.</text>
</comment>
<proteinExistence type="inferred from homology"/>
<protein>
    <recommendedName>
        <fullName evidence="1">Small ribosomal subunit protein uS11</fullName>
    </recommendedName>
    <alternativeName>
        <fullName evidence="2">30S ribosomal protein S11</fullName>
    </alternativeName>
</protein>
<name>RS11_PSEFS</name>
<accession>C3K2V3</accession>
<reference key="1">
    <citation type="journal article" date="2009" name="Genome Biol.">
        <title>Genomic and genetic analyses of diversity and plant interactions of Pseudomonas fluorescens.</title>
        <authorList>
            <person name="Silby M.W."/>
            <person name="Cerdeno-Tarraga A.M."/>
            <person name="Vernikos G.S."/>
            <person name="Giddens S.R."/>
            <person name="Jackson R.W."/>
            <person name="Preston G.M."/>
            <person name="Zhang X.-X."/>
            <person name="Moon C.D."/>
            <person name="Gehrig S.M."/>
            <person name="Godfrey S.A.C."/>
            <person name="Knight C.G."/>
            <person name="Malone J.G."/>
            <person name="Robinson Z."/>
            <person name="Spiers A.J."/>
            <person name="Harris S."/>
            <person name="Challis G.L."/>
            <person name="Yaxley A.M."/>
            <person name="Harris D."/>
            <person name="Seeger K."/>
            <person name="Murphy L."/>
            <person name="Rutter S."/>
            <person name="Squares R."/>
            <person name="Quail M.A."/>
            <person name="Saunders E."/>
            <person name="Mavromatis K."/>
            <person name="Brettin T.S."/>
            <person name="Bentley S.D."/>
            <person name="Hothersall J."/>
            <person name="Stephens E."/>
            <person name="Thomas C.M."/>
            <person name="Parkhill J."/>
            <person name="Levy S.B."/>
            <person name="Rainey P.B."/>
            <person name="Thomson N.R."/>
        </authorList>
    </citation>
    <scope>NUCLEOTIDE SEQUENCE [LARGE SCALE GENOMIC DNA]</scope>
    <source>
        <strain>SBW25</strain>
    </source>
</reference>